<name>TRPA_ACIC1</name>
<feature type="chain" id="PRO_1000057849" description="Tryptophan synthase alpha chain">
    <location>
        <begin position="1"/>
        <end position="267"/>
    </location>
</feature>
<feature type="active site" description="Proton acceptor" evidence="1">
    <location>
        <position position="49"/>
    </location>
</feature>
<feature type="active site" description="Proton acceptor" evidence="1">
    <location>
        <position position="60"/>
    </location>
</feature>
<accession>A0LTT7</accession>
<dbReference type="EC" id="4.2.1.20" evidence="1"/>
<dbReference type="EMBL" id="CP000481">
    <property type="protein sequence ID" value="ABK52847.1"/>
    <property type="molecule type" value="Genomic_DNA"/>
</dbReference>
<dbReference type="RefSeq" id="WP_011719910.1">
    <property type="nucleotide sequence ID" value="NC_008578.1"/>
</dbReference>
<dbReference type="SMR" id="A0LTT7"/>
<dbReference type="FunCoup" id="A0LTT7">
    <property type="interactions" value="206"/>
</dbReference>
<dbReference type="STRING" id="351607.Acel_1075"/>
<dbReference type="KEGG" id="ace:Acel_1075"/>
<dbReference type="eggNOG" id="COG0159">
    <property type="taxonomic scope" value="Bacteria"/>
</dbReference>
<dbReference type="HOGENOM" id="CLU_016734_0_0_11"/>
<dbReference type="InParanoid" id="A0LTT7"/>
<dbReference type="OrthoDB" id="9804578at2"/>
<dbReference type="UniPathway" id="UPA00035">
    <property type="reaction ID" value="UER00044"/>
</dbReference>
<dbReference type="Proteomes" id="UP000008221">
    <property type="component" value="Chromosome"/>
</dbReference>
<dbReference type="GO" id="GO:0005829">
    <property type="term" value="C:cytosol"/>
    <property type="evidence" value="ECO:0007669"/>
    <property type="project" value="TreeGrafter"/>
</dbReference>
<dbReference type="GO" id="GO:0004834">
    <property type="term" value="F:tryptophan synthase activity"/>
    <property type="evidence" value="ECO:0007669"/>
    <property type="project" value="UniProtKB-UniRule"/>
</dbReference>
<dbReference type="CDD" id="cd04724">
    <property type="entry name" value="Tryptophan_synthase_alpha"/>
    <property type="match status" value="1"/>
</dbReference>
<dbReference type="FunFam" id="3.20.20.70:FF:000037">
    <property type="entry name" value="Tryptophan synthase alpha chain"/>
    <property type="match status" value="1"/>
</dbReference>
<dbReference type="Gene3D" id="3.20.20.70">
    <property type="entry name" value="Aldolase class I"/>
    <property type="match status" value="1"/>
</dbReference>
<dbReference type="HAMAP" id="MF_00131">
    <property type="entry name" value="Trp_synth_alpha"/>
    <property type="match status" value="1"/>
</dbReference>
<dbReference type="InterPro" id="IPR013785">
    <property type="entry name" value="Aldolase_TIM"/>
</dbReference>
<dbReference type="InterPro" id="IPR011060">
    <property type="entry name" value="RibuloseP-bd_barrel"/>
</dbReference>
<dbReference type="InterPro" id="IPR018204">
    <property type="entry name" value="Trp_synthase_alpha_AS"/>
</dbReference>
<dbReference type="InterPro" id="IPR002028">
    <property type="entry name" value="Trp_synthase_suA"/>
</dbReference>
<dbReference type="NCBIfam" id="TIGR00262">
    <property type="entry name" value="trpA"/>
    <property type="match status" value="1"/>
</dbReference>
<dbReference type="PANTHER" id="PTHR43406:SF1">
    <property type="entry name" value="TRYPTOPHAN SYNTHASE ALPHA CHAIN, CHLOROPLASTIC"/>
    <property type="match status" value="1"/>
</dbReference>
<dbReference type="PANTHER" id="PTHR43406">
    <property type="entry name" value="TRYPTOPHAN SYNTHASE, ALPHA CHAIN"/>
    <property type="match status" value="1"/>
</dbReference>
<dbReference type="Pfam" id="PF00290">
    <property type="entry name" value="Trp_syntA"/>
    <property type="match status" value="1"/>
</dbReference>
<dbReference type="SUPFAM" id="SSF51366">
    <property type="entry name" value="Ribulose-phoshate binding barrel"/>
    <property type="match status" value="1"/>
</dbReference>
<dbReference type="PROSITE" id="PS00167">
    <property type="entry name" value="TRP_SYNTHASE_ALPHA"/>
    <property type="match status" value="1"/>
</dbReference>
<reference key="1">
    <citation type="journal article" date="2009" name="Genome Res.">
        <title>Complete genome of the cellulolytic thermophile Acidothermus cellulolyticus 11B provides insights into its ecophysiological and evolutionary adaptations.</title>
        <authorList>
            <person name="Barabote R.D."/>
            <person name="Xie G."/>
            <person name="Leu D.H."/>
            <person name="Normand P."/>
            <person name="Necsulea A."/>
            <person name="Daubin V."/>
            <person name="Medigue C."/>
            <person name="Adney W.S."/>
            <person name="Xu X.C."/>
            <person name="Lapidus A."/>
            <person name="Parales R.E."/>
            <person name="Detter C."/>
            <person name="Pujic P."/>
            <person name="Bruce D."/>
            <person name="Lavire C."/>
            <person name="Challacombe J.F."/>
            <person name="Brettin T.S."/>
            <person name="Berry A.M."/>
        </authorList>
    </citation>
    <scope>NUCLEOTIDE SEQUENCE [LARGE SCALE GENOMIC DNA]</scope>
    <source>
        <strain>ATCC 43068 / DSM 8971 / 11B</strain>
    </source>
</reference>
<comment type="function">
    <text evidence="1">The alpha subunit is responsible for the aldol cleavage of indoleglycerol phosphate to indole and glyceraldehyde 3-phosphate.</text>
</comment>
<comment type="catalytic activity">
    <reaction evidence="1">
        <text>(1S,2R)-1-C-(indol-3-yl)glycerol 3-phosphate + L-serine = D-glyceraldehyde 3-phosphate + L-tryptophan + H2O</text>
        <dbReference type="Rhea" id="RHEA:10532"/>
        <dbReference type="ChEBI" id="CHEBI:15377"/>
        <dbReference type="ChEBI" id="CHEBI:33384"/>
        <dbReference type="ChEBI" id="CHEBI:57912"/>
        <dbReference type="ChEBI" id="CHEBI:58866"/>
        <dbReference type="ChEBI" id="CHEBI:59776"/>
        <dbReference type="EC" id="4.2.1.20"/>
    </reaction>
</comment>
<comment type="pathway">
    <text evidence="1">Amino-acid biosynthesis; L-tryptophan biosynthesis; L-tryptophan from chorismate: step 5/5.</text>
</comment>
<comment type="subunit">
    <text evidence="1">Tetramer of two alpha and two beta chains.</text>
</comment>
<comment type="similarity">
    <text evidence="1">Belongs to the TrpA family.</text>
</comment>
<protein>
    <recommendedName>
        <fullName evidence="1">Tryptophan synthase alpha chain</fullName>
        <ecNumber evidence="1">4.2.1.20</ecNumber>
    </recommendedName>
</protein>
<organism>
    <name type="scientific">Acidothermus cellulolyticus (strain ATCC 43068 / DSM 8971 / 11B)</name>
    <dbReference type="NCBI Taxonomy" id="351607"/>
    <lineage>
        <taxon>Bacteria</taxon>
        <taxon>Bacillati</taxon>
        <taxon>Actinomycetota</taxon>
        <taxon>Actinomycetes</taxon>
        <taxon>Acidothermales</taxon>
        <taxon>Acidothermaceae</taxon>
        <taxon>Acidothermus</taxon>
    </lineage>
</organism>
<proteinExistence type="inferred from homology"/>
<sequence length="267" mass="27438">MTAVGEALRRCRAEGRAALVGYLPACFPDVERGIANLQALLDGGVDILEIGLPYSDPVLDGPVIARAADVALRAGSTTAAVLRTLEAVAASGAAAVIMTYWNPVEQYGVDRFAAAVAAAGGSGLVTPDLLPDEAEAWLAASDAHGLDRIFLVAPSSTDERIALTVRFCRGFVYAASVMGVTGVRERASVQAPELVARVRRYTSLPVGVGLGVGTAEQAAEVAQYADAVIVGSAFVRCVFDAGDDAPAALRKLAADLAAGVRRMPATG</sequence>
<gene>
    <name evidence="1" type="primary">trpA</name>
    <name type="ordered locus">Acel_1075</name>
</gene>
<evidence type="ECO:0000255" key="1">
    <source>
        <dbReference type="HAMAP-Rule" id="MF_00131"/>
    </source>
</evidence>
<keyword id="KW-0028">Amino-acid biosynthesis</keyword>
<keyword id="KW-0057">Aromatic amino acid biosynthesis</keyword>
<keyword id="KW-0456">Lyase</keyword>
<keyword id="KW-1185">Reference proteome</keyword>
<keyword id="KW-0822">Tryptophan biosynthesis</keyword>